<organism>
    <name type="scientific">Parvibaculum lavamentivorans (strain DS-1 / DSM 13023 / NCIMB 13966)</name>
    <dbReference type="NCBI Taxonomy" id="402881"/>
    <lineage>
        <taxon>Bacteria</taxon>
        <taxon>Pseudomonadati</taxon>
        <taxon>Pseudomonadota</taxon>
        <taxon>Alphaproteobacteria</taxon>
        <taxon>Hyphomicrobiales</taxon>
        <taxon>Parvibaculaceae</taxon>
        <taxon>Parvibaculum</taxon>
    </lineage>
</organism>
<name>NQOR_PARL1</name>
<sequence length="203" mass="21099">MTGKTKVLVLYHSSYGHIETLAKAVAEGAASQAGTEVLLKRVPETMPADAMANAGMKVEQEAPVATPQELGDYDAVIFGTPTRFGNMTGQMRTFLDQTGGLWAKGALVGKVGSVFTSTGTGGGNETTITSFHTNLFHHGMVVVGLPYSVGTELFDISEVRGGSPYGASTLAGGDGKRQPTEKELSLARKQGAHVASIAAKLKA</sequence>
<keyword id="KW-0285">Flavoprotein</keyword>
<keyword id="KW-0288">FMN</keyword>
<keyword id="KW-0520">NAD</keyword>
<keyword id="KW-0521">NADP</keyword>
<keyword id="KW-0547">Nucleotide-binding</keyword>
<keyword id="KW-0560">Oxidoreductase</keyword>
<keyword id="KW-1185">Reference proteome</keyword>
<comment type="catalytic activity">
    <reaction evidence="1">
        <text>a quinone + NADH + H(+) = a quinol + NAD(+)</text>
        <dbReference type="Rhea" id="RHEA:46160"/>
        <dbReference type="ChEBI" id="CHEBI:15378"/>
        <dbReference type="ChEBI" id="CHEBI:24646"/>
        <dbReference type="ChEBI" id="CHEBI:57540"/>
        <dbReference type="ChEBI" id="CHEBI:57945"/>
        <dbReference type="ChEBI" id="CHEBI:132124"/>
        <dbReference type="EC" id="1.6.5.2"/>
    </reaction>
</comment>
<comment type="catalytic activity">
    <reaction evidence="1">
        <text>a quinone + NADPH + H(+) = a quinol + NADP(+)</text>
        <dbReference type="Rhea" id="RHEA:46164"/>
        <dbReference type="ChEBI" id="CHEBI:15378"/>
        <dbReference type="ChEBI" id="CHEBI:24646"/>
        <dbReference type="ChEBI" id="CHEBI:57783"/>
        <dbReference type="ChEBI" id="CHEBI:58349"/>
        <dbReference type="ChEBI" id="CHEBI:132124"/>
        <dbReference type="EC" id="1.6.5.2"/>
    </reaction>
</comment>
<comment type="cofactor">
    <cofactor evidence="1">
        <name>FMN</name>
        <dbReference type="ChEBI" id="CHEBI:58210"/>
    </cofactor>
    <text evidence="1">Binds 1 FMN per monomer.</text>
</comment>
<comment type="similarity">
    <text evidence="1">Belongs to the WrbA family.</text>
</comment>
<reference key="1">
    <citation type="journal article" date="2011" name="Stand. Genomic Sci.">
        <title>Complete genome sequence of Parvibaculum lavamentivorans type strain (DS-1(T)).</title>
        <authorList>
            <person name="Schleheck D."/>
            <person name="Weiss M."/>
            <person name="Pitluck S."/>
            <person name="Bruce D."/>
            <person name="Land M.L."/>
            <person name="Han S."/>
            <person name="Saunders E."/>
            <person name="Tapia R."/>
            <person name="Detter C."/>
            <person name="Brettin T."/>
            <person name="Han J."/>
            <person name="Woyke T."/>
            <person name="Goodwin L."/>
            <person name="Pennacchio L."/>
            <person name="Nolan M."/>
            <person name="Cook A.M."/>
            <person name="Kjelleberg S."/>
            <person name="Thomas T."/>
        </authorList>
    </citation>
    <scope>NUCLEOTIDE SEQUENCE [LARGE SCALE GENOMIC DNA]</scope>
    <source>
        <strain>DS-1 / DSM 13023 / NCIMB 13966</strain>
    </source>
</reference>
<evidence type="ECO:0000255" key="1">
    <source>
        <dbReference type="HAMAP-Rule" id="MF_01017"/>
    </source>
</evidence>
<accession>A7HVA3</accession>
<dbReference type="EC" id="1.6.5.2" evidence="1"/>
<dbReference type="EMBL" id="CP000774">
    <property type="protein sequence ID" value="ABS63836.1"/>
    <property type="molecule type" value="Genomic_DNA"/>
</dbReference>
<dbReference type="RefSeq" id="WP_012111141.1">
    <property type="nucleotide sequence ID" value="NC_009719.1"/>
</dbReference>
<dbReference type="SMR" id="A7HVA3"/>
<dbReference type="STRING" id="402881.Plav_2222"/>
<dbReference type="CAZy" id="AA6">
    <property type="family name" value="Auxiliary Activities 6"/>
</dbReference>
<dbReference type="KEGG" id="pla:Plav_2222"/>
<dbReference type="eggNOG" id="COG0655">
    <property type="taxonomic scope" value="Bacteria"/>
</dbReference>
<dbReference type="HOGENOM" id="CLU_051402_0_2_5"/>
<dbReference type="Proteomes" id="UP000006377">
    <property type="component" value="Chromosome"/>
</dbReference>
<dbReference type="GO" id="GO:0016020">
    <property type="term" value="C:membrane"/>
    <property type="evidence" value="ECO:0007669"/>
    <property type="project" value="TreeGrafter"/>
</dbReference>
<dbReference type="GO" id="GO:0050660">
    <property type="term" value="F:flavin adenine dinucleotide binding"/>
    <property type="evidence" value="ECO:0007669"/>
    <property type="project" value="UniProtKB-UniRule"/>
</dbReference>
<dbReference type="GO" id="GO:0010181">
    <property type="term" value="F:FMN binding"/>
    <property type="evidence" value="ECO:0007669"/>
    <property type="project" value="InterPro"/>
</dbReference>
<dbReference type="GO" id="GO:0051287">
    <property type="term" value="F:NAD binding"/>
    <property type="evidence" value="ECO:0007669"/>
    <property type="project" value="UniProtKB-UniRule"/>
</dbReference>
<dbReference type="GO" id="GO:0050136">
    <property type="term" value="F:NADH:ubiquinone reductase (non-electrogenic) activity"/>
    <property type="evidence" value="ECO:0007669"/>
    <property type="project" value="RHEA"/>
</dbReference>
<dbReference type="GO" id="GO:0050661">
    <property type="term" value="F:NADP binding"/>
    <property type="evidence" value="ECO:0007669"/>
    <property type="project" value="UniProtKB-UniRule"/>
</dbReference>
<dbReference type="GO" id="GO:0008753">
    <property type="term" value="F:NADPH dehydrogenase (quinone) activity"/>
    <property type="evidence" value="ECO:0007669"/>
    <property type="project" value="RHEA"/>
</dbReference>
<dbReference type="FunFam" id="3.40.50.360:FF:000001">
    <property type="entry name" value="NAD(P)H dehydrogenase (Quinone) FQR1-like"/>
    <property type="match status" value="1"/>
</dbReference>
<dbReference type="Gene3D" id="3.40.50.360">
    <property type="match status" value="1"/>
</dbReference>
<dbReference type="HAMAP" id="MF_01017">
    <property type="entry name" value="NQOR"/>
    <property type="match status" value="1"/>
</dbReference>
<dbReference type="InterPro" id="IPR008254">
    <property type="entry name" value="Flavodoxin/NO_synth"/>
</dbReference>
<dbReference type="InterPro" id="IPR029039">
    <property type="entry name" value="Flavoprotein-like_sf"/>
</dbReference>
<dbReference type="InterPro" id="IPR010089">
    <property type="entry name" value="Flavoprotein_WrbA-like"/>
</dbReference>
<dbReference type="InterPro" id="IPR005025">
    <property type="entry name" value="FMN_Rdtase-like_dom"/>
</dbReference>
<dbReference type="InterPro" id="IPR037513">
    <property type="entry name" value="NQO"/>
</dbReference>
<dbReference type="NCBIfam" id="TIGR01755">
    <property type="entry name" value="flav_wrbA"/>
    <property type="match status" value="1"/>
</dbReference>
<dbReference type="NCBIfam" id="NF002999">
    <property type="entry name" value="PRK03767.1"/>
    <property type="match status" value="1"/>
</dbReference>
<dbReference type="PANTHER" id="PTHR30546">
    <property type="entry name" value="FLAVODOXIN-RELATED PROTEIN WRBA-RELATED"/>
    <property type="match status" value="1"/>
</dbReference>
<dbReference type="PANTHER" id="PTHR30546:SF23">
    <property type="entry name" value="FLAVOPROTEIN-LIKE PROTEIN YCP4-RELATED"/>
    <property type="match status" value="1"/>
</dbReference>
<dbReference type="Pfam" id="PF03358">
    <property type="entry name" value="FMN_red"/>
    <property type="match status" value="1"/>
</dbReference>
<dbReference type="SUPFAM" id="SSF52218">
    <property type="entry name" value="Flavoproteins"/>
    <property type="match status" value="1"/>
</dbReference>
<dbReference type="PROSITE" id="PS50902">
    <property type="entry name" value="FLAVODOXIN_LIKE"/>
    <property type="match status" value="1"/>
</dbReference>
<proteinExistence type="inferred from homology"/>
<gene>
    <name type="ordered locus">Plav_2222</name>
</gene>
<feature type="chain" id="PRO_1000084144" description="NAD(P)H dehydrogenase (quinone)">
    <location>
        <begin position="1"/>
        <end position="203"/>
    </location>
</feature>
<feature type="domain" description="Flavodoxin-like" evidence="1">
    <location>
        <begin position="7"/>
        <end position="194"/>
    </location>
</feature>
<feature type="binding site" evidence="1">
    <location>
        <begin position="13"/>
        <end position="18"/>
    </location>
    <ligand>
        <name>FMN</name>
        <dbReference type="ChEBI" id="CHEBI:58210"/>
    </ligand>
</feature>
<feature type="binding site" evidence="1">
    <location>
        <position position="15"/>
    </location>
    <ligand>
        <name>NAD(+)</name>
        <dbReference type="ChEBI" id="CHEBI:57540"/>
    </ligand>
</feature>
<feature type="binding site" evidence="1">
    <location>
        <begin position="82"/>
        <end position="84"/>
    </location>
    <ligand>
        <name>FMN</name>
        <dbReference type="ChEBI" id="CHEBI:58210"/>
    </ligand>
</feature>
<feature type="binding site" evidence="1">
    <location>
        <position position="102"/>
    </location>
    <ligand>
        <name>substrate</name>
    </ligand>
</feature>
<feature type="binding site" evidence="1">
    <location>
        <begin position="117"/>
        <end position="122"/>
    </location>
    <ligand>
        <name>FMN</name>
        <dbReference type="ChEBI" id="CHEBI:58210"/>
    </ligand>
</feature>
<feature type="binding site" evidence="1">
    <location>
        <position position="137"/>
    </location>
    <ligand>
        <name>FMN</name>
        <dbReference type="ChEBI" id="CHEBI:58210"/>
    </ligand>
</feature>
<protein>
    <recommendedName>
        <fullName evidence="1">NAD(P)H dehydrogenase (quinone)</fullName>
        <ecNumber evidence="1">1.6.5.2</ecNumber>
    </recommendedName>
    <alternativeName>
        <fullName>Flavoprotein WrbA</fullName>
    </alternativeName>
    <alternativeName>
        <fullName evidence="1">NAD(P)H:quinone oxidoreductase</fullName>
        <shortName evidence="1">NQO</shortName>
    </alternativeName>
</protein>